<feature type="chain" id="PRO_0000262329" description="Arginine N-succinyltransferase">
    <location>
        <begin position="1"/>
        <end position="344"/>
    </location>
</feature>
<feature type="active site" description="Proton donor" evidence="1">
    <location>
        <position position="229"/>
    </location>
</feature>
<feature type="binding site" evidence="1">
    <location>
        <position position="125"/>
    </location>
    <ligand>
        <name>succinyl-CoA</name>
        <dbReference type="ChEBI" id="CHEBI:57292"/>
    </ligand>
</feature>
<proteinExistence type="evidence at transcript level"/>
<accession>Q8ZPV1</accession>
<reference key="1">
    <citation type="journal article" date="2001" name="Nature">
        <title>Complete genome sequence of Salmonella enterica serovar Typhimurium LT2.</title>
        <authorList>
            <person name="McClelland M."/>
            <person name="Sanderson K.E."/>
            <person name="Spieth J."/>
            <person name="Clifton S.W."/>
            <person name="Latreille P."/>
            <person name="Courtney L."/>
            <person name="Porwollik S."/>
            <person name="Ali J."/>
            <person name="Dante M."/>
            <person name="Du F."/>
            <person name="Hou S."/>
            <person name="Layman D."/>
            <person name="Leonard S."/>
            <person name="Nguyen C."/>
            <person name="Scott K."/>
            <person name="Holmes A."/>
            <person name="Grewal N."/>
            <person name="Mulvaney E."/>
            <person name="Ryan E."/>
            <person name="Sun H."/>
            <person name="Florea L."/>
            <person name="Miller W."/>
            <person name="Stoneking T."/>
            <person name="Nhan M."/>
            <person name="Waterston R."/>
            <person name="Wilson R.K."/>
        </authorList>
    </citation>
    <scope>NUCLEOTIDE SEQUENCE [LARGE SCALE GENOMIC DNA]</scope>
    <source>
        <strain>LT2 / SGSC1412 / ATCC 700720</strain>
    </source>
</reference>
<reference key="2">
    <citation type="journal article" date="1999" name="J. Bacteriol.">
        <title>Role of ArgR in activation of the ast operon, encoding enzymes of the arginine succinyltransferase pathway in Salmonella typhimurium.</title>
        <authorList>
            <person name="Lu C.-D."/>
            <person name="Abdelal A.T."/>
        </authorList>
    </citation>
    <scope>INDUCTION</scope>
</reference>
<organism>
    <name type="scientific">Salmonella typhimurium (strain LT2 / SGSC1412 / ATCC 700720)</name>
    <dbReference type="NCBI Taxonomy" id="99287"/>
    <lineage>
        <taxon>Bacteria</taxon>
        <taxon>Pseudomonadati</taxon>
        <taxon>Pseudomonadota</taxon>
        <taxon>Gammaproteobacteria</taxon>
        <taxon>Enterobacterales</taxon>
        <taxon>Enterobacteriaceae</taxon>
        <taxon>Salmonella</taxon>
    </lineage>
</organism>
<dbReference type="EC" id="2.3.1.109" evidence="1"/>
<dbReference type="EMBL" id="AE006468">
    <property type="protein sequence ID" value="AAL20229.1"/>
    <property type="molecule type" value="Genomic_DNA"/>
</dbReference>
<dbReference type="RefSeq" id="NP_460270.1">
    <property type="nucleotide sequence ID" value="NC_003197.2"/>
</dbReference>
<dbReference type="RefSeq" id="WP_001263889.1">
    <property type="nucleotide sequence ID" value="NC_003197.2"/>
</dbReference>
<dbReference type="SMR" id="Q8ZPV1"/>
<dbReference type="STRING" id="99287.STM1304"/>
<dbReference type="PaxDb" id="99287-STM1304"/>
<dbReference type="GeneID" id="1252822"/>
<dbReference type="KEGG" id="stm:STM1304"/>
<dbReference type="PATRIC" id="fig|99287.12.peg.1386"/>
<dbReference type="HOGENOM" id="CLU_057655_0_0_6"/>
<dbReference type="OMA" id="FDGGPHF"/>
<dbReference type="PhylomeDB" id="Q8ZPV1"/>
<dbReference type="BioCyc" id="SENT99287:STM1304-MONOMER"/>
<dbReference type="UniPathway" id="UPA00185">
    <property type="reaction ID" value="UER00279"/>
</dbReference>
<dbReference type="Proteomes" id="UP000001014">
    <property type="component" value="Chromosome"/>
</dbReference>
<dbReference type="GO" id="GO:0008791">
    <property type="term" value="F:arginine N-succinyltransferase activity"/>
    <property type="evidence" value="ECO:0007669"/>
    <property type="project" value="UniProtKB-UniRule"/>
</dbReference>
<dbReference type="GO" id="GO:0009015">
    <property type="term" value="F:N-succinylarginine dihydrolase activity"/>
    <property type="evidence" value="ECO:0000318"/>
    <property type="project" value="GO_Central"/>
</dbReference>
<dbReference type="GO" id="GO:0006527">
    <property type="term" value="P:arginine catabolic process"/>
    <property type="evidence" value="ECO:0000318"/>
    <property type="project" value="GO_Central"/>
</dbReference>
<dbReference type="GO" id="GO:0019544">
    <property type="term" value="P:arginine catabolic process to glutamate"/>
    <property type="evidence" value="ECO:0007669"/>
    <property type="project" value="UniProtKB-UniRule"/>
</dbReference>
<dbReference type="GO" id="GO:0019545">
    <property type="term" value="P:arginine catabolic process to succinate"/>
    <property type="evidence" value="ECO:0007669"/>
    <property type="project" value="UniProtKB-UniRule"/>
</dbReference>
<dbReference type="Gene3D" id="2.40.40.20">
    <property type="match status" value="1"/>
</dbReference>
<dbReference type="Gene3D" id="3.40.630.30">
    <property type="match status" value="1"/>
</dbReference>
<dbReference type="HAMAP" id="MF_01171">
    <property type="entry name" value="AstA"/>
    <property type="match status" value="1"/>
</dbReference>
<dbReference type="InterPro" id="IPR016181">
    <property type="entry name" value="Acyl_CoA_acyltransferase"/>
</dbReference>
<dbReference type="InterPro" id="IPR007041">
    <property type="entry name" value="Arg_succinylTrfase_AstA/AruG"/>
</dbReference>
<dbReference type="InterPro" id="IPR017650">
    <property type="entry name" value="Arginine_N-succinylTrfase"/>
</dbReference>
<dbReference type="NCBIfam" id="TIGR03243">
    <property type="entry name" value="arg_catab_AOST"/>
    <property type="match status" value="1"/>
</dbReference>
<dbReference type="NCBIfam" id="TIGR03244">
    <property type="entry name" value="arg_catab_AstA"/>
    <property type="match status" value="1"/>
</dbReference>
<dbReference type="NCBIfam" id="NF007770">
    <property type="entry name" value="PRK10456.1"/>
    <property type="match status" value="1"/>
</dbReference>
<dbReference type="PANTHER" id="PTHR30420:SF1">
    <property type="entry name" value="ARGININE N-SUCCINYLTRANSFERASE"/>
    <property type="match status" value="1"/>
</dbReference>
<dbReference type="PANTHER" id="PTHR30420">
    <property type="entry name" value="N-SUCCINYLARGININE DIHYDROLASE"/>
    <property type="match status" value="1"/>
</dbReference>
<dbReference type="Pfam" id="PF04958">
    <property type="entry name" value="AstA"/>
    <property type="match status" value="1"/>
</dbReference>
<dbReference type="SUPFAM" id="SSF55729">
    <property type="entry name" value="Acyl-CoA N-acyltransferases (Nat)"/>
    <property type="match status" value="1"/>
</dbReference>
<keyword id="KW-0012">Acyltransferase</keyword>
<keyword id="KW-0056">Arginine metabolism</keyword>
<keyword id="KW-1185">Reference proteome</keyword>
<keyword id="KW-0808">Transferase</keyword>
<evidence type="ECO:0000255" key="1">
    <source>
        <dbReference type="HAMAP-Rule" id="MF_01171"/>
    </source>
</evidence>
<evidence type="ECO:0000269" key="2">
    <source>
    </source>
</evidence>
<comment type="function">
    <text evidence="1">Catalyzes the transfer of succinyl-CoA to arginine to produce N(2)-succinylarginine.</text>
</comment>
<comment type="catalytic activity">
    <reaction evidence="1">
        <text>succinyl-CoA + L-arginine = N(2)-succinyl-L-arginine + CoA + H(+)</text>
        <dbReference type="Rhea" id="RHEA:15185"/>
        <dbReference type="ChEBI" id="CHEBI:15378"/>
        <dbReference type="ChEBI" id="CHEBI:32682"/>
        <dbReference type="ChEBI" id="CHEBI:57287"/>
        <dbReference type="ChEBI" id="CHEBI:57292"/>
        <dbReference type="ChEBI" id="CHEBI:58241"/>
        <dbReference type="EC" id="2.3.1.109"/>
    </reaction>
</comment>
<comment type="pathway">
    <text evidence="1">Amino-acid degradation; L-arginine degradation via AST pathway; L-glutamate and succinate from L-arginine: step 1/5.</text>
</comment>
<comment type="induction">
    <text evidence="2">By nitrogen and carbon starvation, and arginine, via the ArgR and Crp transcriptional regulators.</text>
</comment>
<comment type="similarity">
    <text evidence="1">Belongs to the arginine N-succinyltransferase family.</text>
</comment>
<protein>
    <recommendedName>
        <fullName evidence="1">Arginine N-succinyltransferase</fullName>
        <shortName evidence="1">AST</shortName>
        <ecNumber evidence="1">2.3.1.109</ecNumber>
    </recommendedName>
    <alternativeName>
        <fullName evidence="1">AOST</fullName>
    </alternativeName>
</protein>
<gene>
    <name evidence="1" type="primary">astA</name>
    <name type="ordered locus">STM1304</name>
</gene>
<sequence length="344" mass="38278">MRVIRPVEHADIAALMQLAGKTGGGLTSLPANEATLAARIERALKTWSGELPKGEQGYVFVLEDSETGEVGGICAIEVAVGLNDPWYNYRVGTLVHASKELNVYNALPTLFLSNDHTGSSELCTLFLDPEWRKEGNGYLLSKSRFMFMAAFRDKFNEKVVAEMRGVIDEHGYSPFWQSLGKRFFSMDFSRADFLCGTGQKAFIAELMPKHPIYTHFLSEEAQAVIGEVHPQTAPARAVLEKEGFRYRHYIDIFDGGPTLECDIDRVRAIRKSRLVEVAEGQPAPGDYPACLVANENYHHFRAALVRADPQTSRLVLTAAQLDALKCRAGDHVRLVRLCAEEKTV</sequence>
<name>ASTA_SALTY</name>